<accession>A9IW08</accession>
<gene>
    <name evidence="1" type="primary">rpsH</name>
    <name type="ordered locus">BT_1504</name>
</gene>
<proteinExistence type="inferred from homology"/>
<comment type="function">
    <text evidence="1">One of the primary rRNA binding proteins, it binds directly to 16S rRNA central domain where it helps coordinate assembly of the platform of the 30S subunit.</text>
</comment>
<comment type="subunit">
    <text evidence="1">Part of the 30S ribosomal subunit. Contacts proteins S5 and S12.</text>
</comment>
<comment type="similarity">
    <text evidence="1">Belongs to the universal ribosomal protein uS8 family.</text>
</comment>
<protein>
    <recommendedName>
        <fullName evidence="1">Small ribosomal subunit protein uS8</fullName>
    </recommendedName>
    <alternativeName>
        <fullName evidence="2">30S ribosomal protein S8</fullName>
    </alternativeName>
</protein>
<evidence type="ECO:0000255" key="1">
    <source>
        <dbReference type="HAMAP-Rule" id="MF_01302"/>
    </source>
</evidence>
<evidence type="ECO:0000305" key="2"/>
<name>RS8_BART1</name>
<sequence length="132" mass="14457">MSMSDPLGDMLTRIRNALGRKKDKVVTPASKLRAHVLDVLQSEGYIRGYNQVDLGDGKAELEIELKYFEGMAAIRDISRVSKPGRRVYVSAKSLPQVANGLGISVLSTPKGVMADHEAREQNVGGELLCRVF</sequence>
<feature type="chain" id="PRO_1000085910" description="Small ribosomal subunit protein uS8">
    <location>
        <begin position="1"/>
        <end position="132"/>
    </location>
</feature>
<dbReference type="EMBL" id="AM260525">
    <property type="protein sequence ID" value="CAK01850.1"/>
    <property type="molecule type" value="Genomic_DNA"/>
</dbReference>
<dbReference type="RefSeq" id="WP_012231988.1">
    <property type="nucleotide sequence ID" value="NC_010161.1"/>
</dbReference>
<dbReference type="SMR" id="A9IW08"/>
<dbReference type="KEGG" id="btr:BT_1504"/>
<dbReference type="eggNOG" id="COG0096">
    <property type="taxonomic scope" value="Bacteria"/>
</dbReference>
<dbReference type="HOGENOM" id="CLU_098428_0_0_5"/>
<dbReference type="Proteomes" id="UP000001592">
    <property type="component" value="Chromosome"/>
</dbReference>
<dbReference type="GO" id="GO:1990904">
    <property type="term" value="C:ribonucleoprotein complex"/>
    <property type="evidence" value="ECO:0007669"/>
    <property type="project" value="UniProtKB-KW"/>
</dbReference>
<dbReference type="GO" id="GO:0005840">
    <property type="term" value="C:ribosome"/>
    <property type="evidence" value="ECO:0007669"/>
    <property type="project" value="UniProtKB-KW"/>
</dbReference>
<dbReference type="GO" id="GO:0019843">
    <property type="term" value="F:rRNA binding"/>
    <property type="evidence" value="ECO:0007669"/>
    <property type="project" value="UniProtKB-UniRule"/>
</dbReference>
<dbReference type="GO" id="GO:0003735">
    <property type="term" value="F:structural constituent of ribosome"/>
    <property type="evidence" value="ECO:0007669"/>
    <property type="project" value="InterPro"/>
</dbReference>
<dbReference type="GO" id="GO:0006412">
    <property type="term" value="P:translation"/>
    <property type="evidence" value="ECO:0007669"/>
    <property type="project" value="UniProtKB-UniRule"/>
</dbReference>
<dbReference type="FunFam" id="3.30.1370.30:FF:000002">
    <property type="entry name" value="30S ribosomal protein S8"/>
    <property type="match status" value="1"/>
</dbReference>
<dbReference type="FunFam" id="3.30.1490.10:FF:000001">
    <property type="entry name" value="30S ribosomal protein S8"/>
    <property type="match status" value="1"/>
</dbReference>
<dbReference type="Gene3D" id="3.30.1370.30">
    <property type="match status" value="1"/>
</dbReference>
<dbReference type="Gene3D" id="3.30.1490.10">
    <property type="match status" value="1"/>
</dbReference>
<dbReference type="HAMAP" id="MF_01302_B">
    <property type="entry name" value="Ribosomal_uS8_B"/>
    <property type="match status" value="1"/>
</dbReference>
<dbReference type="InterPro" id="IPR000630">
    <property type="entry name" value="Ribosomal_uS8"/>
</dbReference>
<dbReference type="InterPro" id="IPR047863">
    <property type="entry name" value="Ribosomal_uS8_CS"/>
</dbReference>
<dbReference type="InterPro" id="IPR035987">
    <property type="entry name" value="Ribosomal_uS8_sf"/>
</dbReference>
<dbReference type="NCBIfam" id="NF001109">
    <property type="entry name" value="PRK00136.1"/>
    <property type="match status" value="1"/>
</dbReference>
<dbReference type="PANTHER" id="PTHR11758">
    <property type="entry name" value="40S RIBOSOMAL PROTEIN S15A"/>
    <property type="match status" value="1"/>
</dbReference>
<dbReference type="Pfam" id="PF00410">
    <property type="entry name" value="Ribosomal_S8"/>
    <property type="match status" value="1"/>
</dbReference>
<dbReference type="SUPFAM" id="SSF56047">
    <property type="entry name" value="Ribosomal protein S8"/>
    <property type="match status" value="1"/>
</dbReference>
<dbReference type="PROSITE" id="PS00053">
    <property type="entry name" value="RIBOSOMAL_S8"/>
    <property type="match status" value="1"/>
</dbReference>
<keyword id="KW-0687">Ribonucleoprotein</keyword>
<keyword id="KW-0689">Ribosomal protein</keyword>
<keyword id="KW-0694">RNA-binding</keyword>
<keyword id="KW-0699">rRNA-binding</keyword>
<organism>
    <name type="scientific">Bartonella tribocorum (strain CIP 105476 / IBS 506)</name>
    <dbReference type="NCBI Taxonomy" id="382640"/>
    <lineage>
        <taxon>Bacteria</taxon>
        <taxon>Pseudomonadati</taxon>
        <taxon>Pseudomonadota</taxon>
        <taxon>Alphaproteobacteria</taxon>
        <taxon>Hyphomicrobiales</taxon>
        <taxon>Bartonellaceae</taxon>
        <taxon>Bartonella</taxon>
    </lineage>
</organism>
<reference key="1">
    <citation type="journal article" date="2007" name="Nat. Genet.">
        <title>Genomic analysis of Bartonella identifies type IV secretion systems as host adaptability factors.</title>
        <authorList>
            <person name="Saenz H.L."/>
            <person name="Engel P."/>
            <person name="Stoeckli M.C."/>
            <person name="Lanz C."/>
            <person name="Raddatz G."/>
            <person name="Vayssier-Taussat M."/>
            <person name="Birtles R."/>
            <person name="Schuster S.C."/>
            <person name="Dehio C."/>
        </authorList>
    </citation>
    <scope>NUCLEOTIDE SEQUENCE [LARGE SCALE GENOMIC DNA]</scope>
    <source>
        <strain>CIP 105476 / IBS 506</strain>
    </source>
</reference>